<proteinExistence type="evidence at protein level"/>
<organism evidence="15">
    <name type="scientific">Arabidopsis thaliana</name>
    <name type="common">Mouse-ear cress</name>
    <dbReference type="NCBI Taxonomy" id="3702"/>
    <lineage>
        <taxon>Eukaryota</taxon>
        <taxon>Viridiplantae</taxon>
        <taxon>Streptophyta</taxon>
        <taxon>Embryophyta</taxon>
        <taxon>Tracheophyta</taxon>
        <taxon>Spermatophyta</taxon>
        <taxon>Magnoliopsida</taxon>
        <taxon>eudicotyledons</taxon>
        <taxon>Gunneridae</taxon>
        <taxon>Pentapetalae</taxon>
        <taxon>rosids</taxon>
        <taxon>malvids</taxon>
        <taxon>Brassicales</taxon>
        <taxon>Brassicaceae</taxon>
        <taxon>Camelineae</taxon>
        <taxon>Arabidopsis</taxon>
    </lineage>
</organism>
<protein>
    <recommendedName>
        <fullName evidence="10">Metalloendoproteinase 2-MMP</fullName>
        <shortName evidence="10">At2-MMP</shortName>
        <ecNumber evidence="11">3.4.24.-</ecNumber>
    </recommendedName>
</protein>
<keyword id="KW-1003">Cell membrane</keyword>
<keyword id="KW-0217">Developmental protein</keyword>
<keyword id="KW-0325">Glycoprotein</keyword>
<keyword id="KW-0336">GPI-anchor</keyword>
<keyword id="KW-0378">Hydrolase</keyword>
<keyword id="KW-0449">Lipoprotein</keyword>
<keyword id="KW-0472">Membrane</keyword>
<keyword id="KW-0479">Metal-binding</keyword>
<keyword id="KW-0482">Metalloprotease</keyword>
<keyword id="KW-0645">Protease</keyword>
<keyword id="KW-1185">Reference proteome</keyword>
<keyword id="KW-0732">Signal</keyword>
<keyword id="KW-0862">Zinc</keyword>
<keyword id="KW-0865">Zymogen</keyword>
<dbReference type="EC" id="3.4.24.-" evidence="11"/>
<dbReference type="EMBL" id="AC002062">
    <property type="protein sequence ID" value="AAB61099.1"/>
    <property type="molecule type" value="Genomic_DNA"/>
</dbReference>
<dbReference type="EMBL" id="CP002684">
    <property type="protein sequence ID" value="AEE35027.1"/>
    <property type="molecule type" value="Genomic_DNA"/>
</dbReference>
<dbReference type="EMBL" id="AK226646">
    <property type="protein sequence ID" value="BAE98757.1"/>
    <property type="molecule type" value="mRNA"/>
</dbReference>
<dbReference type="PIR" id="E96724">
    <property type="entry name" value="E96724"/>
</dbReference>
<dbReference type="RefSeq" id="NP_177174.1">
    <property type="nucleotide sequence ID" value="NM_105685.4"/>
</dbReference>
<dbReference type="SMR" id="O04529"/>
<dbReference type="FunCoup" id="O04529">
    <property type="interactions" value="41"/>
</dbReference>
<dbReference type="STRING" id="3702.O04529"/>
<dbReference type="MEROPS" id="M10.A01"/>
<dbReference type="GlyCosmos" id="O04529">
    <property type="glycosylation" value="9 sites, No reported glycans"/>
</dbReference>
<dbReference type="GlyGen" id="O04529">
    <property type="glycosylation" value="9 sites"/>
</dbReference>
<dbReference type="PaxDb" id="3702-AT1G70170.1"/>
<dbReference type="ProteomicsDB" id="243265"/>
<dbReference type="EnsemblPlants" id="AT1G70170.1">
    <property type="protein sequence ID" value="AT1G70170.1"/>
    <property type="gene ID" value="AT1G70170"/>
</dbReference>
<dbReference type="GeneID" id="843353"/>
<dbReference type="Gramene" id="AT1G70170.1">
    <property type="protein sequence ID" value="AT1G70170.1"/>
    <property type="gene ID" value="AT1G70170"/>
</dbReference>
<dbReference type="KEGG" id="ath:AT1G70170"/>
<dbReference type="Araport" id="AT1G70170"/>
<dbReference type="TAIR" id="AT1G70170">
    <property type="gene designation" value="MMP"/>
</dbReference>
<dbReference type="eggNOG" id="KOG1565">
    <property type="taxonomic scope" value="Eukaryota"/>
</dbReference>
<dbReference type="HOGENOM" id="CLU_015489_4_0_1"/>
<dbReference type="InParanoid" id="O04529"/>
<dbReference type="OMA" id="MHGGRRK"/>
<dbReference type="OrthoDB" id="406838at2759"/>
<dbReference type="PhylomeDB" id="O04529"/>
<dbReference type="PRO" id="PR:O04529"/>
<dbReference type="Proteomes" id="UP000006548">
    <property type="component" value="Chromosome 1"/>
</dbReference>
<dbReference type="ExpressionAtlas" id="O04529">
    <property type="expression patterns" value="baseline and differential"/>
</dbReference>
<dbReference type="GO" id="GO:0048046">
    <property type="term" value="C:apoplast"/>
    <property type="evidence" value="ECO:0000314"/>
    <property type="project" value="TAIR"/>
</dbReference>
<dbReference type="GO" id="GO:0031012">
    <property type="term" value="C:extracellular matrix"/>
    <property type="evidence" value="ECO:0007669"/>
    <property type="project" value="InterPro"/>
</dbReference>
<dbReference type="GO" id="GO:0005886">
    <property type="term" value="C:plasma membrane"/>
    <property type="evidence" value="ECO:0000314"/>
    <property type="project" value="TAIR"/>
</dbReference>
<dbReference type="GO" id="GO:0098552">
    <property type="term" value="C:side of membrane"/>
    <property type="evidence" value="ECO:0007669"/>
    <property type="project" value="UniProtKB-KW"/>
</dbReference>
<dbReference type="GO" id="GO:0004222">
    <property type="term" value="F:metalloendopeptidase activity"/>
    <property type="evidence" value="ECO:0000314"/>
    <property type="project" value="UniProtKB"/>
</dbReference>
<dbReference type="GO" id="GO:0008237">
    <property type="term" value="F:metallopeptidase activity"/>
    <property type="evidence" value="ECO:0000314"/>
    <property type="project" value="TAIR"/>
</dbReference>
<dbReference type="GO" id="GO:0008270">
    <property type="term" value="F:zinc ion binding"/>
    <property type="evidence" value="ECO:0007669"/>
    <property type="project" value="InterPro"/>
</dbReference>
<dbReference type="GO" id="GO:0050832">
    <property type="term" value="P:defense response to fungus"/>
    <property type="evidence" value="ECO:0000315"/>
    <property type="project" value="TAIR"/>
</dbReference>
<dbReference type="GO" id="GO:0080186">
    <property type="term" value="P:developmental vegetative growth"/>
    <property type="evidence" value="ECO:0000315"/>
    <property type="project" value="UniProtKB"/>
</dbReference>
<dbReference type="GO" id="GO:1900056">
    <property type="term" value="P:negative regulation of leaf senescence"/>
    <property type="evidence" value="ECO:0000315"/>
    <property type="project" value="UniProtKB"/>
</dbReference>
<dbReference type="GO" id="GO:0006508">
    <property type="term" value="P:proteolysis"/>
    <property type="evidence" value="ECO:0000314"/>
    <property type="project" value="TAIR"/>
</dbReference>
<dbReference type="GO" id="GO:2000028">
    <property type="term" value="P:regulation of photoperiodism, flowering"/>
    <property type="evidence" value="ECO:0000315"/>
    <property type="project" value="UniProtKB"/>
</dbReference>
<dbReference type="GO" id="GO:0046686">
    <property type="term" value="P:response to cadmium ion"/>
    <property type="evidence" value="ECO:0000270"/>
    <property type="project" value="UniProtKB"/>
</dbReference>
<dbReference type="GO" id="GO:0009753">
    <property type="term" value="P:response to jasmonic acid"/>
    <property type="evidence" value="ECO:0000270"/>
    <property type="project" value="UniProtKB"/>
</dbReference>
<dbReference type="GO" id="GO:0009651">
    <property type="term" value="P:response to salt stress"/>
    <property type="evidence" value="ECO:0000270"/>
    <property type="project" value="UniProtKB"/>
</dbReference>
<dbReference type="CDD" id="cd04278">
    <property type="entry name" value="ZnMc_MMP"/>
    <property type="match status" value="1"/>
</dbReference>
<dbReference type="FunFam" id="3.40.390.10:FF:000018">
    <property type="entry name" value="Metalloendoproteinase 1"/>
    <property type="match status" value="1"/>
</dbReference>
<dbReference type="Gene3D" id="3.40.390.10">
    <property type="entry name" value="Collagenase (Catalytic Domain)"/>
    <property type="match status" value="1"/>
</dbReference>
<dbReference type="InterPro" id="IPR033739">
    <property type="entry name" value="M10A_MMP"/>
</dbReference>
<dbReference type="InterPro" id="IPR024079">
    <property type="entry name" value="MetalloPept_cat_dom_sf"/>
</dbReference>
<dbReference type="InterPro" id="IPR001818">
    <property type="entry name" value="Pept_M10_metallopeptidase"/>
</dbReference>
<dbReference type="InterPro" id="IPR021190">
    <property type="entry name" value="Pept_M10A"/>
</dbReference>
<dbReference type="InterPro" id="IPR021158">
    <property type="entry name" value="Pept_M10A_Zn_BS"/>
</dbReference>
<dbReference type="InterPro" id="IPR006026">
    <property type="entry name" value="Peptidase_Metallo"/>
</dbReference>
<dbReference type="InterPro" id="IPR002477">
    <property type="entry name" value="Peptidoglycan-bd-like"/>
</dbReference>
<dbReference type="InterPro" id="IPR036365">
    <property type="entry name" value="PGBD-like_sf"/>
</dbReference>
<dbReference type="PANTHER" id="PTHR10201">
    <property type="entry name" value="MATRIX METALLOPROTEINASE"/>
    <property type="match status" value="1"/>
</dbReference>
<dbReference type="PANTHER" id="PTHR10201:SF247">
    <property type="entry name" value="METALLOENDOPROTEINASE 2-MMP"/>
    <property type="match status" value="1"/>
</dbReference>
<dbReference type="Pfam" id="PF00413">
    <property type="entry name" value="Peptidase_M10"/>
    <property type="match status" value="1"/>
</dbReference>
<dbReference type="Pfam" id="PF01471">
    <property type="entry name" value="PG_binding_1"/>
    <property type="match status" value="1"/>
</dbReference>
<dbReference type="PRINTS" id="PR00138">
    <property type="entry name" value="MATRIXIN"/>
</dbReference>
<dbReference type="SMART" id="SM00235">
    <property type="entry name" value="ZnMc"/>
    <property type="match status" value="1"/>
</dbReference>
<dbReference type="SUPFAM" id="SSF55486">
    <property type="entry name" value="Metalloproteases ('zincins'), catalytic domain"/>
    <property type="match status" value="1"/>
</dbReference>
<dbReference type="SUPFAM" id="SSF47090">
    <property type="entry name" value="PGBD-like"/>
    <property type="match status" value="1"/>
</dbReference>
<dbReference type="PROSITE" id="PS00546">
    <property type="entry name" value="CYSTEINE_SWITCH"/>
    <property type="match status" value="1"/>
</dbReference>
<dbReference type="PROSITE" id="PS00142">
    <property type="entry name" value="ZINC_PROTEASE"/>
    <property type="match status" value="1"/>
</dbReference>
<feature type="signal peptide" evidence="4">
    <location>
        <begin position="1"/>
        <end position="20"/>
    </location>
</feature>
<feature type="propeptide" id="PRO_0000433522" description="Activation peptide" evidence="3">
    <location>
        <begin position="21"/>
        <end position="154"/>
    </location>
</feature>
<feature type="chain" id="PRO_0000433523" description="Metalloendoproteinase 2-MMP" evidence="4">
    <location>
        <begin position="155"/>
        <end position="349"/>
    </location>
</feature>
<feature type="propeptide" id="PRO_0000433524" description="Removed in mature form" evidence="4">
    <location>
        <begin position="350"/>
        <end position="378"/>
    </location>
</feature>
<feature type="short sequence motif" description="Cysteine switch" evidence="4">
    <location>
        <begin position="118"/>
        <end position="125"/>
    </location>
</feature>
<feature type="active site" evidence="6">
    <location>
        <position position="281"/>
    </location>
</feature>
<feature type="binding site" description="in inhibited form" evidence="1">
    <location>
        <position position="120"/>
    </location>
    <ligand>
        <name>Zn(2+)</name>
        <dbReference type="ChEBI" id="CHEBI:29105"/>
        <note>catalytic</note>
    </ligand>
</feature>
<feature type="binding site" evidence="6">
    <location>
        <position position="280"/>
    </location>
    <ligand>
        <name>Zn(2+)</name>
        <dbReference type="ChEBI" id="CHEBI:29105"/>
        <note>catalytic</note>
    </ligand>
</feature>
<feature type="binding site" evidence="6">
    <location>
        <position position="284"/>
    </location>
    <ligand>
        <name>Zn(2+)</name>
        <dbReference type="ChEBI" id="CHEBI:29105"/>
        <note>catalytic</note>
    </ligand>
</feature>
<feature type="binding site" evidence="6">
    <location>
        <position position="290"/>
    </location>
    <ligand>
        <name>Zn(2+)</name>
        <dbReference type="ChEBI" id="CHEBI:29105"/>
        <note>catalytic</note>
    </ligand>
</feature>
<feature type="lipid moiety-binding region" description="GPI-anchor amidated serine" evidence="4">
    <location>
        <position position="349"/>
    </location>
</feature>
<feature type="glycosylation site" description="N-linked (GlcNAc...) asparagine" evidence="5">
    <location>
        <position position="25"/>
    </location>
</feature>
<feature type="glycosylation site" description="N-linked (GlcNAc...) asparagine" evidence="5">
    <location>
        <position position="35"/>
    </location>
</feature>
<feature type="glycosylation site" description="N-linked (GlcNAc...) asparagine" evidence="5">
    <location>
        <position position="46"/>
    </location>
</feature>
<feature type="glycosylation site" description="N-linked (GlcNAc...) asparagine" evidence="5">
    <location>
        <position position="79"/>
    </location>
</feature>
<feature type="glycosylation site" description="N-linked (GlcNAc...) asparagine" evidence="5">
    <location>
        <position position="102"/>
    </location>
</feature>
<feature type="glycosylation site" description="N-linked (GlcNAc...) asparagine" evidence="5">
    <location>
        <position position="127"/>
    </location>
</feature>
<feature type="glycosylation site" description="N-linked (GlcNAc...) asparagine" evidence="5">
    <location>
        <position position="143"/>
    </location>
</feature>
<feature type="glycosylation site" description="N-linked (GlcNAc...) asparagine" evidence="5">
    <location>
        <position position="203"/>
    </location>
</feature>
<feature type="glycosylation site" description="N-linked (GlcNAc...) asparagine" evidence="5">
    <location>
        <position position="330"/>
    </location>
</feature>
<feature type="sequence conflict" description="In Ref. 3; BAE98757." evidence="11" ref="3">
    <original>G</original>
    <variation>D</variation>
    <location>
        <position position="356"/>
    </location>
</feature>
<name>2MMP_ARATH</name>
<gene>
    <name evidence="10" type="primary">2MMP</name>
    <name evidence="14" type="synonym">MMP</name>
    <name evidence="12" type="ordered locus">At1g70170</name>
    <name evidence="13" type="ORF">F20P5.11</name>
</gene>
<comment type="function">
    <text evidence="2 8 9">Matrix metalloproteinases (MMPs) or matrixins may play a role in the degradation and remodeling of the extracellular matrix (ECM) during development or in response to stresses (By similarity). Required for plant growth, morphogenesis, and development with particular relevance for flowering and senescence (PubMed:11726650). Active on McaPLGLDpaAR-NH(2) (QF24) and myelin basic protein (MBP) and, to some extent, on beta-casein (PubMed:24156403).</text>
</comment>
<comment type="cofactor">
    <cofactor evidence="1">
        <name>Zn(2+)</name>
        <dbReference type="ChEBI" id="CHEBI:29105"/>
    </cofactor>
    <text evidence="1">Binds 1 zinc ion per subunit.</text>
</comment>
<comment type="activity regulation">
    <text evidence="9">Repressed by acetohydroxamic acid (AHA).</text>
</comment>
<comment type="biophysicochemical properties">
    <phDependence>
        <text evidence="9">Optimum pH is 7-8.</text>
    </phDependence>
    <temperatureDependence>
        <text evidence="9">Optimum temperature is 45 degrees Celsius.</text>
    </temperatureDependence>
</comment>
<comment type="subcellular location">
    <subcellularLocation>
        <location evidence="4">Cell membrane</location>
        <topology evidence="4">Lipid-anchor</topology>
        <topology evidence="4">GPI-anchor</topology>
        <orientation evidence="11">Extracellular side</orientation>
    </subcellularLocation>
</comment>
<comment type="tissue specificity">
    <text evidence="7 8">Mostly expressed in roots, and, to a lower extent, in flowers, leaves and stems.</text>
</comment>
<comment type="developmental stage">
    <text evidence="8">Accumulates during aging. Expressed in leaves and roots of young seedlings and in leaves, roots, and inflorescences of mature flowering plants. In leaves, present in the phloem, in developing xylem elements, epidermal cells, and neighboring mesophyll cell layers. In flowers, localized in pistils, ovules, and receptacles.</text>
</comment>
<comment type="induction">
    <text evidence="8">Induced in seedling rosette leaves by methyl jasmonate (MeJA) and cadmium (Cd). Induced in seedling roots by salt stress (NaCl). Inhibited in leaves and inflorescences of adult plants by exposure to cadmium.</text>
</comment>
<comment type="domain">
    <text evidence="3">The conserved cysteine present in the cysteine-switch motif binds the catalytic zinc ion, thus inhibiting the enzyme. The dissociation of the cysteine from the zinc ion upon the activation-peptide release activates the enzyme.</text>
</comment>
<comment type="disruption phenotype">
    <text evidence="8">Growth inhibition, due to inhibited onset of shoots, reduced growth of roots, leaves and shoots, late flowering, fast degradation of chlorophyll in leaves and early senescence.</text>
</comment>
<comment type="similarity">
    <text evidence="11">Belongs to the peptidase M10A family. Matrix metalloproteinases (MMPs) subfamily.</text>
</comment>
<reference key="1">
    <citation type="journal article" date="2000" name="Nature">
        <title>Sequence and analysis of chromosome 1 of the plant Arabidopsis thaliana.</title>
        <authorList>
            <person name="Theologis A."/>
            <person name="Ecker J.R."/>
            <person name="Palm C.J."/>
            <person name="Federspiel N.A."/>
            <person name="Kaul S."/>
            <person name="White O."/>
            <person name="Alonso J."/>
            <person name="Altafi H."/>
            <person name="Araujo R."/>
            <person name="Bowman C.L."/>
            <person name="Brooks S.Y."/>
            <person name="Buehler E."/>
            <person name="Chan A."/>
            <person name="Chao Q."/>
            <person name="Chen H."/>
            <person name="Cheuk R.F."/>
            <person name="Chin C.W."/>
            <person name="Chung M.K."/>
            <person name="Conn L."/>
            <person name="Conway A.B."/>
            <person name="Conway A.R."/>
            <person name="Creasy T.H."/>
            <person name="Dewar K."/>
            <person name="Dunn P."/>
            <person name="Etgu P."/>
            <person name="Feldblyum T.V."/>
            <person name="Feng J.-D."/>
            <person name="Fong B."/>
            <person name="Fujii C.Y."/>
            <person name="Gill J.E."/>
            <person name="Goldsmith A.D."/>
            <person name="Haas B."/>
            <person name="Hansen N.F."/>
            <person name="Hughes B."/>
            <person name="Huizar L."/>
            <person name="Hunter J.L."/>
            <person name="Jenkins J."/>
            <person name="Johnson-Hopson C."/>
            <person name="Khan S."/>
            <person name="Khaykin E."/>
            <person name="Kim C.J."/>
            <person name="Koo H.L."/>
            <person name="Kremenetskaia I."/>
            <person name="Kurtz D.B."/>
            <person name="Kwan A."/>
            <person name="Lam B."/>
            <person name="Langin-Hooper S."/>
            <person name="Lee A."/>
            <person name="Lee J.M."/>
            <person name="Lenz C.A."/>
            <person name="Li J.H."/>
            <person name="Li Y.-P."/>
            <person name="Lin X."/>
            <person name="Liu S.X."/>
            <person name="Liu Z.A."/>
            <person name="Luros J.S."/>
            <person name="Maiti R."/>
            <person name="Marziali A."/>
            <person name="Militscher J."/>
            <person name="Miranda M."/>
            <person name="Nguyen M."/>
            <person name="Nierman W.C."/>
            <person name="Osborne B.I."/>
            <person name="Pai G."/>
            <person name="Peterson J."/>
            <person name="Pham P.K."/>
            <person name="Rizzo M."/>
            <person name="Rooney T."/>
            <person name="Rowley D."/>
            <person name="Sakano H."/>
            <person name="Salzberg S.L."/>
            <person name="Schwartz J.R."/>
            <person name="Shinn P."/>
            <person name="Southwick A.M."/>
            <person name="Sun H."/>
            <person name="Tallon L.J."/>
            <person name="Tambunga G."/>
            <person name="Toriumi M.J."/>
            <person name="Town C.D."/>
            <person name="Utterback T."/>
            <person name="Van Aken S."/>
            <person name="Vaysberg M."/>
            <person name="Vysotskaia V.S."/>
            <person name="Walker M."/>
            <person name="Wu D."/>
            <person name="Yu G."/>
            <person name="Fraser C.M."/>
            <person name="Venter J.C."/>
            <person name="Davis R.W."/>
        </authorList>
    </citation>
    <scope>NUCLEOTIDE SEQUENCE [LARGE SCALE GENOMIC DNA]</scope>
    <source>
        <strain>cv. Columbia</strain>
    </source>
</reference>
<reference key="2">
    <citation type="journal article" date="2017" name="Plant J.">
        <title>Araport11: a complete reannotation of the Arabidopsis thaliana reference genome.</title>
        <authorList>
            <person name="Cheng C.Y."/>
            <person name="Krishnakumar V."/>
            <person name="Chan A.P."/>
            <person name="Thibaud-Nissen F."/>
            <person name="Schobel S."/>
            <person name="Town C.D."/>
        </authorList>
    </citation>
    <scope>GENOME REANNOTATION</scope>
    <source>
        <strain>cv. Columbia</strain>
    </source>
</reference>
<reference key="3">
    <citation type="submission" date="2006-07" db="EMBL/GenBank/DDBJ databases">
        <title>Large-scale analysis of RIKEN Arabidopsis full-length (RAFL) cDNAs.</title>
        <authorList>
            <person name="Totoki Y."/>
            <person name="Seki M."/>
            <person name="Ishida J."/>
            <person name="Nakajima M."/>
            <person name="Enju A."/>
            <person name="Kamiya A."/>
            <person name="Narusaka M."/>
            <person name="Shin-i T."/>
            <person name="Nakagawa M."/>
            <person name="Sakamoto N."/>
            <person name="Oishi K."/>
            <person name="Kohara Y."/>
            <person name="Kobayashi M."/>
            <person name="Toyoda A."/>
            <person name="Sakaki Y."/>
            <person name="Sakurai T."/>
            <person name="Iida K."/>
            <person name="Akiyama K."/>
            <person name="Satou M."/>
            <person name="Toyoda T."/>
            <person name="Konagaya A."/>
            <person name="Carninci P."/>
            <person name="Kawai J."/>
            <person name="Hayashizaki Y."/>
            <person name="Shinozaki K."/>
        </authorList>
    </citation>
    <scope>NUCLEOTIDE SEQUENCE [LARGE SCALE MRNA]</scope>
    <source>
        <strain>cv. Columbia</strain>
    </source>
</reference>
<reference key="4">
    <citation type="journal article" date="1999" name="J. Biol. Chem.">
        <title>Matrix metalloproteinase homologues from Arabidopsis thaliana. Expression and activity.</title>
        <authorList>
            <person name="Maidment J.M."/>
            <person name="Moore D."/>
            <person name="Murphy G.P."/>
            <person name="Murphy G."/>
            <person name="Clark I.M."/>
        </authorList>
    </citation>
    <scope>TISSUE SPECIFICITY</scope>
    <scope>GENE FAMILY</scope>
    <scope>NOMENCLATURE</scope>
</reference>
<reference key="5">
    <citation type="journal article" date="2002" name="J. Biol. Chem.">
        <title>Mutation of the matrix metalloproteinase At2-MMP inhibits growth and causes late flowering and early senescence in Arabidopsis.</title>
        <authorList>
            <person name="Golldack D."/>
            <person name="Popova O.V."/>
            <person name="Dietz K.-J."/>
        </authorList>
    </citation>
    <scope>FUNCTION</scope>
    <scope>DISRUPTION PHENOTYPE</scope>
    <scope>TISSUE SPECIFICITY</scope>
    <scope>DEVELOPMENTAL STAGE</scope>
    <scope>INDUCTION BY METHYL JASMONATE AND CADMIUM</scope>
    <source>
        <strain>cv. Columbia</strain>
    </source>
</reference>
<reference key="6">
    <citation type="journal article" date="2014" name="Biochem. J.">
        <title>Family-wide characterization of matrix metalloproteinases from Arabidopsis thaliana reveals their distinct proteolytic activity and cleavage site specificity.</title>
        <authorList>
            <person name="Marino G."/>
            <person name="Huesgen P.F."/>
            <person name="Eckhard U."/>
            <person name="Overall C.M."/>
            <person name="Schroeder W.P."/>
            <person name="Funk C."/>
        </authorList>
    </citation>
    <scope>FUNCTION</scope>
    <scope>BIOPHYSICOCHEMICAL PROPERTIES</scope>
    <scope>ACTIVITY REGULATION</scope>
    <scope>GENE FAMILY</scope>
    <source>
        <strain>cv. Columbia</strain>
    </source>
</reference>
<accession>O04529</accession>
<accession>Q0WVU1</accession>
<evidence type="ECO:0000250" key="1"/>
<evidence type="ECO:0000250" key="2">
    <source>
        <dbReference type="UniProtKB" id="O23507"/>
    </source>
</evidence>
<evidence type="ECO:0000250" key="3">
    <source>
        <dbReference type="UniProtKB" id="P29136"/>
    </source>
</evidence>
<evidence type="ECO:0000255" key="4"/>
<evidence type="ECO:0000255" key="5">
    <source>
        <dbReference type="PROSITE-ProRule" id="PRU00498"/>
    </source>
</evidence>
<evidence type="ECO:0000255" key="6">
    <source>
        <dbReference type="PROSITE-ProRule" id="PRU10095"/>
    </source>
</evidence>
<evidence type="ECO:0000269" key="7">
    <source>
    </source>
</evidence>
<evidence type="ECO:0000269" key="8">
    <source>
    </source>
</evidence>
<evidence type="ECO:0000269" key="9">
    <source>
    </source>
</evidence>
<evidence type="ECO:0000303" key="10">
    <source>
    </source>
</evidence>
<evidence type="ECO:0000305" key="11"/>
<evidence type="ECO:0000312" key="12">
    <source>
        <dbReference type="Araport" id="AT1G70170"/>
    </source>
</evidence>
<evidence type="ECO:0000312" key="13">
    <source>
        <dbReference type="EMBL" id="AAB61099.1"/>
    </source>
</evidence>
<evidence type="ECO:0000312" key="14">
    <source>
        <dbReference type="EMBL" id="AEE35027.1"/>
    </source>
</evidence>
<evidence type="ECO:0000312" key="15">
    <source>
        <dbReference type="Proteomes" id="UP000006548"/>
    </source>
</evidence>
<sequence length="378" mass="42006">MRFCVFGFLSLFLIVSPASAWFFPNSTAVPPSLRNTTRVFWDAFSNFTGCHHGQNVDGLYRIKKYFQRFGYIPETFSGNFTDDFDDILKAAVELYQTNFNLNVTGELDALTIQHIVIPRCGNPDVVNGTSLMHGGRRKTFEVNFSRTHLHAVKRYTLFPGEPRWPRNRRDLTYAFDPKNPLTEEVKSVFSRAFGRWSDVTALNFTLSESFSTSDITIGFYTGDHGDGEPFDGVLGTLAHAFSPPSGKFHLDADENWVVSGDLDSFLSVTAAVDLESVAVHEIGHLLGLGHSSVEESIMYPTITTGKRKVDLTNDDVEGIQYLYGANPNFNGTTSPPSTTKHQRDTGGFSAAWRIDGSSRSTIVSLLLSTVGLVLWFLP</sequence>